<name>YBN5_SCHPO</name>
<gene>
    <name type="ORF">SPBC8E4.05c</name>
</gene>
<evidence type="ECO:0000269" key="1">
    <source>
    </source>
</evidence>
<evidence type="ECO:0000305" key="2"/>
<organism>
    <name type="scientific">Schizosaccharomyces pombe (strain 972 / ATCC 24843)</name>
    <name type="common">Fission yeast</name>
    <dbReference type="NCBI Taxonomy" id="284812"/>
    <lineage>
        <taxon>Eukaryota</taxon>
        <taxon>Fungi</taxon>
        <taxon>Dikarya</taxon>
        <taxon>Ascomycota</taxon>
        <taxon>Taphrinomycotina</taxon>
        <taxon>Schizosaccharomycetes</taxon>
        <taxon>Schizosaccharomycetales</taxon>
        <taxon>Schizosaccharomycetaceae</taxon>
        <taxon>Schizosaccharomyces</taxon>
    </lineage>
</organism>
<proteinExistence type="inferred from homology"/>
<comment type="subcellular location">
    <subcellularLocation>
        <location evidence="1">Cytoplasm</location>
    </subcellularLocation>
    <subcellularLocation>
        <location evidence="1">Nucleus</location>
    </subcellularLocation>
</comment>
<comment type="similarity">
    <text evidence="2">Belongs to the class-II fumarase/aspartase family.</text>
</comment>
<reference key="1">
    <citation type="journal article" date="2002" name="Nature">
        <title>The genome sequence of Schizosaccharomyces pombe.</title>
        <authorList>
            <person name="Wood V."/>
            <person name="Gwilliam R."/>
            <person name="Rajandream M.A."/>
            <person name="Lyne M.H."/>
            <person name="Lyne R."/>
            <person name="Stewart A."/>
            <person name="Sgouros J.G."/>
            <person name="Peat N."/>
            <person name="Hayles J."/>
            <person name="Baker S.G."/>
            <person name="Basham D."/>
            <person name="Bowman S."/>
            <person name="Brooks K."/>
            <person name="Brown D."/>
            <person name="Brown S."/>
            <person name="Chillingworth T."/>
            <person name="Churcher C.M."/>
            <person name="Collins M."/>
            <person name="Connor R."/>
            <person name="Cronin A."/>
            <person name="Davis P."/>
            <person name="Feltwell T."/>
            <person name="Fraser A."/>
            <person name="Gentles S."/>
            <person name="Goble A."/>
            <person name="Hamlin N."/>
            <person name="Harris D.E."/>
            <person name="Hidalgo J."/>
            <person name="Hodgson G."/>
            <person name="Holroyd S."/>
            <person name="Hornsby T."/>
            <person name="Howarth S."/>
            <person name="Huckle E.J."/>
            <person name="Hunt S."/>
            <person name="Jagels K."/>
            <person name="James K.D."/>
            <person name="Jones L."/>
            <person name="Jones M."/>
            <person name="Leather S."/>
            <person name="McDonald S."/>
            <person name="McLean J."/>
            <person name="Mooney P."/>
            <person name="Moule S."/>
            <person name="Mungall K.L."/>
            <person name="Murphy L.D."/>
            <person name="Niblett D."/>
            <person name="Odell C."/>
            <person name="Oliver K."/>
            <person name="O'Neil S."/>
            <person name="Pearson D."/>
            <person name="Quail M.A."/>
            <person name="Rabbinowitsch E."/>
            <person name="Rutherford K.M."/>
            <person name="Rutter S."/>
            <person name="Saunders D."/>
            <person name="Seeger K."/>
            <person name="Sharp S."/>
            <person name="Skelton J."/>
            <person name="Simmonds M.N."/>
            <person name="Squares R."/>
            <person name="Squares S."/>
            <person name="Stevens K."/>
            <person name="Taylor K."/>
            <person name="Taylor R.G."/>
            <person name="Tivey A."/>
            <person name="Walsh S.V."/>
            <person name="Warren T."/>
            <person name="Whitehead S."/>
            <person name="Woodward J.R."/>
            <person name="Volckaert G."/>
            <person name="Aert R."/>
            <person name="Robben J."/>
            <person name="Grymonprez B."/>
            <person name="Weltjens I."/>
            <person name="Vanstreels E."/>
            <person name="Rieger M."/>
            <person name="Schaefer M."/>
            <person name="Mueller-Auer S."/>
            <person name="Gabel C."/>
            <person name="Fuchs M."/>
            <person name="Duesterhoeft A."/>
            <person name="Fritzc C."/>
            <person name="Holzer E."/>
            <person name="Moestl D."/>
            <person name="Hilbert H."/>
            <person name="Borzym K."/>
            <person name="Langer I."/>
            <person name="Beck A."/>
            <person name="Lehrach H."/>
            <person name="Reinhardt R."/>
            <person name="Pohl T.M."/>
            <person name="Eger P."/>
            <person name="Zimmermann W."/>
            <person name="Wedler H."/>
            <person name="Wambutt R."/>
            <person name="Purnelle B."/>
            <person name="Goffeau A."/>
            <person name="Cadieu E."/>
            <person name="Dreano S."/>
            <person name="Gloux S."/>
            <person name="Lelaure V."/>
            <person name="Mottier S."/>
            <person name="Galibert F."/>
            <person name="Aves S.J."/>
            <person name="Xiang Z."/>
            <person name="Hunt C."/>
            <person name="Moore K."/>
            <person name="Hurst S.M."/>
            <person name="Lucas M."/>
            <person name="Rochet M."/>
            <person name="Gaillardin C."/>
            <person name="Tallada V.A."/>
            <person name="Garzon A."/>
            <person name="Thode G."/>
            <person name="Daga R.R."/>
            <person name="Cruzado L."/>
            <person name="Jimenez J."/>
            <person name="Sanchez M."/>
            <person name="del Rey F."/>
            <person name="Benito J."/>
            <person name="Dominguez A."/>
            <person name="Revuelta J.L."/>
            <person name="Moreno S."/>
            <person name="Armstrong J."/>
            <person name="Forsburg S.L."/>
            <person name="Cerutti L."/>
            <person name="Lowe T."/>
            <person name="McCombie W.R."/>
            <person name="Paulsen I."/>
            <person name="Potashkin J."/>
            <person name="Shpakovski G.V."/>
            <person name="Ussery D."/>
            <person name="Barrell B.G."/>
            <person name="Nurse P."/>
        </authorList>
    </citation>
    <scope>NUCLEOTIDE SEQUENCE [LARGE SCALE GENOMIC DNA]</scope>
    <source>
        <strain>972 / ATCC 24843</strain>
    </source>
</reference>
<reference key="2">
    <citation type="journal article" date="2006" name="Nat. Biotechnol.">
        <title>ORFeome cloning and global analysis of protein localization in the fission yeast Schizosaccharomyces pombe.</title>
        <authorList>
            <person name="Matsuyama A."/>
            <person name="Arai R."/>
            <person name="Yashiroda Y."/>
            <person name="Shirai A."/>
            <person name="Kamata A."/>
            <person name="Sekido S."/>
            <person name="Kobayashi Y."/>
            <person name="Hashimoto A."/>
            <person name="Hamamoto M."/>
            <person name="Hiraoka Y."/>
            <person name="Horinouchi S."/>
            <person name="Yoshida M."/>
        </authorList>
    </citation>
    <scope>SUBCELLULAR LOCATION [LARGE SCALE ANALYSIS]</scope>
</reference>
<keyword id="KW-0963">Cytoplasm</keyword>
<keyword id="KW-0539">Nucleus</keyword>
<keyword id="KW-1185">Reference proteome</keyword>
<protein>
    <recommendedName>
        <fullName>Uncharacterized protein C8E4.05c</fullName>
    </recommendedName>
</protein>
<sequence length="447" mass="49942">MPVSVSDSFVFRNIFGDAEIRKIWSDENRTQEYLNWEAALARAEASLGIIPKYAGEEIQRVCKVENIDFSKLEEETINIGYPVLGVVHQLANLCSGDSGKYCHWGATTQDVTDSATVRQMIDSFKIIKGYLEKAIELATVLVIKHRETTMAGRSNLQQAVPITFGFKMARFVATLRRHHQRLCELLPRVSVLEFGGACGTLASLENKGLMVQQKLAEELGLLQPEIAWHTERDRIAEAGCFLGMLTGTLAKFATDIKLLMQTEVAEVFEPFKANRGSSSTMPQKRNPISCVYITASTSFVRQGVAALLDAMVEDHERATGAWEIEWIVLPDVFVHTVGTLKQTVFLLEGLEVHPSRMNENLSITNGLIVSEAVMMALAPKLGRDEAHDLVYRLCHLSIQENKPLVELLLAERQVTNYLSKEEVTSLLNPENYLGSTFEMIERALQIP</sequence>
<accession>O42889</accession>
<dbReference type="EMBL" id="CU329671">
    <property type="protein sequence ID" value="CAA16998.1"/>
    <property type="molecule type" value="Genomic_DNA"/>
</dbReference>
<dbReference type="PIR" id="T50377">
    <property type="entry name" value="T39170"/>
</dbReference>
<dbReference type="RefSeq" id="NP_596842.1">
    <property type="nucleotide sequence ID" value="NM_001023864.2"/>
</dbReference>
<dbReference type="SMR" id="O42889"/>
<dbReference type="BioGRID" id="277752">
    <property type="interactions" value="41"/>
</dbReference>
<dbReference type="STRING" id="284812.O42889"/>
<dbReference type="SwissPalm" id="O42889"/>
<dbReference type="PaxDb" id="4896-SPBC8E4.05c.1"/>
<dbReference type="EnsemblFungi" id="SPBC8E4.05c.1">
    <property type="protein sequence ID" value="SPBC8E4.05c.1:pep"/>
    <property type="gene ID" value="SPBC8E4.05c"/>
</dbReference>
<dbReference type="KEGG" id="spo:2541238"/>
<dbReference type="PomBase" id="SPBC8E4.05c"/>
<dbReference type="VEuPathDB" id="FungiDB:SPBC8E4.05c"/>
<dbReference type="eggNOG" id="KOG2700">
    <property type="taxonomic scope" value="Eukaryota"/>
</dbReference>
<dbReference type="HOGENOM" id="CLU_030949_3_2_1"/>
<dbReference type="InParanoid" id="O42889"/>
<dbReference type="OMA" id="HTQRDEW"/>
<dbReference type="PhylomeDB" id="O42889"/>
<dbReference type="PRO" id="PR:O42889"/>
<dbReference type="Proteomes" id="UP000002485">
    <property type="component" value="Chromosome II"/>
</dbReference>
<dbReference type="GO" id="GO:0005829">
    <property type="term" value="C:cytosol"/>
    <property type="evidence" value="ECO:0007005"/>
    <property type="project" value="PomBase"/>
</dbReference>
<dbReference type="GO" id="GO:0005634">
    <property type="term" value="C:nucleus"/>
    <property type="evidence" value="ECO:0007005"/>
    <property type="project" value="PomBase"/>
</dbReference>
<dbReference type="GO" id="GO:0016840">
    <property type="term" value="F:carbon-nitrogen lyase activity"/>
    <property type="evidence" value="ECO:0000255"/>
    <property type="project" value="PomBase"/>
</dbReference>
<dbReference type="CDD" id="cd01597">
    <property type="entry name" value="pCLME"/>
    <property type="match status" value="1"/>
</dbReference>
<dbReference type="FunFam" id="1.20.200.10:FF:000014">
    <property type="entry name" value="3-carboxy-cis,cis-muconate cycloisomerase"/>
    <property type="match status" value="1"/>
</dbReference>
<dbReference type="FunFam" id="1.10.40.30:FF:000007">
    <property type="entry name" value="Adenylosuccinate lyase"/>
    <property type="match status" value="1"/>
</dbReference>
<dbReference type="Gene3D" id="1.10.40.30">
    <property type="entry name" value="Fumarase/aspartase (C-terminal domain)"/>
    <property type="match status" value="1"/>
</dbReference>
<dbReference type="Gene3D" id="1.20.200.10">
    <property type="entry name" value="Fumarase/aspartase (Central domain)"/>
    <property type="match status" value="1"/>
</dbReference>
<dbReference type="InterPro" id="IPR019468">
    <property type="entry name" value="AdenyloSucc_lyase_C"/>
</dbReference>
<dbReference type="InterPro" id="IPR000362">
    <property type="entry name" value="Fumarate_lyase_fam"/>
</dbReference>
<dbReference type="InterPro" id="IPR022761">
    <property type="entry name" value="Fumarate_lyase_N"/>
</dbReference>
<dbReference type="InterPro" id="IPR008948">
    <property type="entry name" value="L-Aspartase-like"/>
</dbReference>
<dbReference type="PANTHER" id="PTHR43172">
    <property type="entry name" value="ADENYLOSUCCINATE LYASE"/>
    <property type="match status" value="1"/>
</dbReference>
<dbReference type="PANTHER" id="PTHR43172:SF2">
    <property type="entry name" value="ADENYLOSUCCINATE LYASE C-TERMINAL DOMAIN-CONTAINING PROTEIN"/>
    <property type="match status" value="1"/>
</dbReference>
<dbReference type="Pfam" id="PF10397">
    <property type="entry name" value="ADSL_C"/>
    <property type="match status" value="1"/>
</dbReference>
<dbReference type="Pfam" id="PF00206">
    <property type="entry name" value="Lyase_1"/>
    <property type="match status" value="1"/>
</dbReference>
<dbReference type="PRINTS" id="PR00145">
    <property type="entry name" value="ARGSUCLYASE"/>
</dbReference>
<dbReference type="PRINTS" id="PR00149">
    <property type="entry name" value="FUMRATELYASE"/>
</dbReference>
<dbReference type="SMART" id="SM00998">
    <property type="entry name" value="ADSL_C"/>
    <property type="match status" value="1"/>
</dbReference>
<dbReference type="SUPFAM" id="SSF48557">
    <property type="entry name" value="L-aspartase-like"/>
    <property type="match status" value="1"/>
</dbReference>
<feature type="chain" id="PRO_0000310362" description="Uncharacterized protein C8E4.05c">
    <location>
        <begin position="1"/>
        <end position="447"/>
    </location>
</feature>